<sequence>MLTCNDKINPKTLLEEIMALRPWRKGPFEISQIKIDSEWDSSIKWDLVKNATLLKDKVVADVGCNNGYYLFKMLEHGPKSLVGFDPGVLVKKQFEFLAPFFDKEKKIIYESLGVEDLHEKYPNAFDVIFCLGVLYHRKSPLEALKALYHALKIKGELVLDTLIIDSPLDIALCPKKTYAKMKNVYFIPSVSALKGWCERVGFENFEILSVLKTTPKEQRKTDFILGQSLEDFLDETDHSKTLEGYDAPLRGYFKMLKPSKR</sequence>
<dbReference type="EC" id="2.5.1.-" evidence="1"/>
<dbReference type="EMBL" id="CP000241">
    <property type="protein sequence ID" value="ABF85042.1"/>
    <property type="molecule type" value="Genomic_DNA"/>
</dbReference>
<dbReference type="RefSeq" id="WP_000954429.1">
    <property type="nucleotide sequence ID" value="NC_008086.1"/>
</dbReference>
<dbReference type="SMR" id="Q1CSN0"/>
<dbReference type="KEGG" id="hpa:HPAG1_0975"/>
<dbReference type="HOGENOM" id="CLU_052665_1_0_7"/>
<dbReference type="GO" id="GO:0016765">
    <property type="term" value="F:transferase activity, transferring alkyl or aryl (other than methyl) groups"/>
    <property type="evidence" value="ECO:0007669"/>
    <property type="project" value="InterPro"/>
</dbReference>
<dbReference type="GO" id="GO:0002098">
    <property type="term" value="P:tRNA wobble uridine modification"/>
    <property type="evidence" value="ECO:0007669"/>
    <property type="project" value="InterPro"/>
</dbReference>
<dbReference type="CDD" id="cd02440">
    <property type="entry name" value="AdoMet_MTases"/>
    <property type="match status" value="1"/>
</dbReference>
<dbReference type="Gene3D" id="3.40.50.150">
    <property type="entry name" value="Vaccinia Virus protein VP39"/>
    <property type="match status" value="1"/>
</dbReference>
<dbReference type="HAMAP" id="MF_01590">
    <property type="entry name" value="tRNA_carboxymethyltr_CmoB"/>
    <property type="match status" value="1"/>
</dbReference>
<dbReference type="InterPro" id="IPR010017">
    <property type="entry name" value="CmoB"/>
</dbReference>
<dbReference type="InterPro" id="IPR027555">
    <property type="entry name" value="Mo5U34_MeTrfas-like"/>
</dbReference>
<dbReference type="InterPro" id="IPR029063">
    <property type="entry name" value="SAM-dependent_MTases_sf"/>
</dbReference>
<dbReference type="NCBIfam" id="NF011650">
    <property type="entry name" value="PRK15068.1"/>
    <property type="match status" value="1"/>
</dbReference>
<dbReference type="NCBIfam" id="TIGR00452">
    <property type="entry name" value="tRNA 5-methoxyuridine(34)/uridine 5-oxyacetic acid(34) synthase CmoB"/>
    <property type="match status" value="1"/>
</dbReference>
<dbReference type="Pfam" id="PF08003">
    <property type="entry name" value="Methyltransf_9"/>
    <property type="match status" value="1"/>
</dbReference>
<dbReference type="SUPFAM" id="SSF53335">
    <property type="entry name" value="S-adenosyl-L-methionine-dependent methyltransferases"/>
    <property type="match status" value="1"/>
</dbReference>
<feature type="chain" id="PRO_0000313930" description="tRNA U34 carboxymethyltransferase">
    <location>
        <begin position="1"/>
        <end position="261"/>
    </location>
</feature>
<feature type="binding site" evidence="1">
    <location>
        <position position="25"/>
    </location>
    <ligand>
        <name>carboxy-S-adenosyl-L-methionine</name>
        <dbReference type="ChEBI" id="CHEBI:134278"/>
    </ligand>
</feature>
<feature type="binding site" evidence="1">
    <location>
        <position position="39"/>
    </location>
    <ligand>
        <name>carboxy-S-adenosyl-L-methionine</name>
        <dbReference type="ChEBI" id="CHEBI:134278"/>
    </ligand>
</feature>
<feature type="binding site" evidence="1">
    <location>
        <position position="44"/>
    </location>
    <ligand>
        <name>carboxy-S-adenosyl-L-methionine</name>
        <dbReference type="ChEBI" id="CHEBI:134278"/>
    </ligand>
</feature>
<feature type="binding site" evidence="1">
    <location>
        <position position="63"/>
    </location>
    <ligand>
        <name>carboxy-S-adenosyl-L-methionine</name>
        <dbReference type="ChEBI" id="CHEBI:134278"/>
    </ligand>
</feature>
<feature type="binding site" evidence="1">
    <location>
        <begin position="114"/>
        <end position="115"/>
    </location>
    <ligand>
        <name>carboxy-S-adenosyl-L-methionine</name>
        <dbReference type="ChEBI" id="CHEBI:134278"/>
    </ligand>
</feature>
<feature type="binding site" evidence="1">
    <location>
        <position position="135"/>
    </location>
    <ligand>
        <name>carboxy-S-adenosyl-L-methionine</name>
        <dbReference type="ChEBI" id="CHEBI:134278"/>
    </ligand>
</feature>
<feature type="binding site" evidence="1">
    <location>
        <position position="250"/>
    </location>
    <ligand>
        <name>carboxy-S-adenosyl-L-methionine</name>
        <dbReference type="ChEBI" id="CHEBI:134278"/>
    </ligand>
</feature>
<accession>Q1CSN0</accession>
<keyword id="KW-0808">Transferase</keyword>
<keyword id="KW-0819">tRNA processing</keyword>
<name>CMOB_HELPH</name>
<protein>
    <recommendedName>
        <fullName evidence="1">tRNA U34 carboxymethyltransferase</fullName>
        <ecNumber evidence="1">2.5.1.-</ecNumber>
    </recommendedName>
</protein>
<comment type="function">
    <text evidence="1">Catalyzes carboxymethyl transfer from carboxy-S-adenosyl-L-methionine (Cx-SAM) to 5-hydroxyuridine (ho5U) to form 5-carboxymethoxyuridine (cmo5U) at position 34 in tRNAs.</text>
</comment>
<comment type="catalytic activity">
    <reaction evidence="1">
        <text>carboxy-S-adenosyl-L-methionine + 5-hydroxyuridine(34) in tRNA = 5-carboxymethoxyuridine(34) in tRNA + S-adenosyl-L-homocysteine + H(+)</text>
        <dbReference type="Rhea" id="RHEA:52848"/>
        <dbReference type="Rhea" id="RHEA-COMP:13381"/>
        <dbReference type="Rhea" id="RHEA-COMP:13383"/>
        <dbReference type="ChEBI" id="CHEBI:15378"/>
        <dbReference type="ChEBI" id="CHEBI:57856"/>
        <dbReference type="ChEBI" id="CHEBI:134278"/>
        <dbReference type="ChEBI" id="CHEBI:136877"/>
        <dbReference type="ChEBI" id="CHEBI:136879"/>
    </reaction>
</comment>
<comment type="subunit">
    <text evidence="1">Homotetramer.</text>
</comment>
<comment type="similarity">
    <text evidence="1">Belongs to the class I-like SAM-binding methyltransferase superfamily. CmoB family.</text>
</comment>
<evidence type="ECO:0000255" key="1">
    <source>
        <dbReference type="HAMAP-Rule" id="MF_01590"/>
    </source>
</evidence>
<proteinExistence type="inferred from homology"/>
<reference key="1">
    <citation type="journal article" date="2006" name="Proc. Natl. Acad. Sci. U.S.A.">
        <title>The complete genome sequence of a chronic atrophic gastritis Helicobacter pylori strain: evolution during disease progression.</title>
        <authorList>
            <person name="Oh J.D."/>
            <person name="Kling-Baeckhed H."/>
            <person name="Giannakis M."/>
            <person name="Xu J."/>
            <person name="Fulton R.S."/>
            <person name="Fulton L.A."/>
            <person name="Cordum H.S."/>
            <person name="Wang C."/>
            <person name="Elliott G."/>
            <person name="Edwards J."/>
            <person name="Mardis E.R."/>
            <person name="Engstrand L.G."/>
            <person name="Gordon J.I."/>
        </authorList>
    </citation>
    <scope>NUCLEOTIDE SEQUENCE [LARGE SCALE GENOMIC DNA]</scope>
    <source>
        <strain>HPAG1</strain>
    </source>
</reference>
<organism>
    <name type="scientific">Helicobacter pylori (strain HPAG1)</name>
    <dbReference type="NCBI Taxonomy" id="357544"/>
    <lineage>
        <taxon>Bacteria</taxon>
        <taxon>Pseudomonadati</taxon>
        <taxon>Campylobacterota</taxon>
        <taxon>Epsilonproteobacteria</taxon>
        <taxon>Campylobacterales</taxon>
        <taxon>Helicobacteraceae</taxon>
        <taxon>Helicobacter</taxon>
    </lineage>
</organism>
<gene>
    <name evidence="1" type="primary">cmoB</name>
    <name type="ordered locus">HPAG1_0975</name>
</gene>